<feature type="chain" id="PRO_0000309034" description="Uncharacterized protein YHR032W-A">
    <location>
        <begin position="1"/>
        <end position="59"/>
    </location>
</feature>
<dbReference type="EMBL" id="U00062">
    <property type="status" value="NOT_ANNOTATED_CDS"/>
    <property type="molecule type" value="Genomic_DNA"/>
</dbReference>
<dbReference type="EMBL" id="BK006934">
    <property type="status" value="NOT_ANNOTATED_CDS"/>
    <property type="molecule type" value="Genomic_DNA"/>
</dbReference>
<dbReference type="STRING" id="4932.YHR032W-A"/>
<dbReference type="PaxDb" id="4932-YHR032W-A"/>
<dbReference type="EnsemblFungi" id="YHR032W-A_mRNA">
    <property type="protein sequence ID" value="YHR032W-A"/>
    <property type="gene ID" value="YHR032W-A"/>
</dbReference>
<dbReference type="AGR" id="SGD:S000028831"/>
<dbReference type="SGD" id="S000028831">
    <property type="gene designation" value="YHR032W-A"/>
</dbReference>
<dbReference type="HOGENOM" id="CLU_2962165_0_0_1"/>
<dbReference type="InParanoid" id="P0C5N6"/>
<dbReference type="PRO" id="PR:P0C5N6"/>
<dbReference type="Proteomes" id="UP000002311">
    <property type="component" value="Chromosome VIII"/>
</dbReference>
<dbReference type="RNAct" id="P0C5N6">
    <property type="molecule type" value="protein"/>
</dbReference>
<reference key="1">
    <citation type="journal article" date="1994" name="Science">
        <title>Complete nucleotide sequence of Saccharomyces cerevisiae chromosome VIII.</title>
        <authorList>
            <person name="Johnston M."/>
            <person name="Andrews S."/>
            <person name="Brinkman R."/>
            <person name="Cooper J."/>
            <person name="Ding H."/>
            <person name="Dover J."/>
            <person name="Du Z."/>
            <person name="Favello A."/>
            <person name="Fulton L."/>
            <person name="Gattung S."/>
            <person name="Geisel C."/>
            <person name="Kirsten J."/>
            <person name="Kucaba T."/>
            <person name="Hillier L.W."/>
            <person name="Jier M."/>
            <person name="Johnston L."/>
            <person name="Langston Y."/>
            <person name="Latreille P."/>
            <person name="Louis E.J."/>
            <person name="Macri C."/>
            <person name="Mardis E."/>
            <person name="Menezes S."/>
            <person name="Mouser L."/>
            <person name="Nhan M."/>
            <person name="Rifkin L."/>
            <person name="Riles L."/>
            <person name="St Peter H."/>
            <person name="Trevaskis E."/>
            <person name="Vaughan K."/>
            <person name="Vignati D."/>
            <person name="Wilcox L."/>
            <person name="Wohldman P."/>
            <person name="Waterston R."/>
            <person name="Wilson R."/>
            <person name="Vaudin M."/>
        </authorList>
    </citation>
    <scope>NUCLEOTIDE SEQUENCE [LARGE SCALE GENOMIC DNA]</scope>
    <source>
        <strain>ATCC 204508 / S288c</strain>
    </source>
</reference>
<reference key="2">
    <citation type="journal article" date="2014" name="G3 (Bethesda)">
        <title>The reference genome sequence of Saccharomyces cerevisiae: Then and now.</title>
        <authorList>
            <person name="Engel S.R."/>
            <person name="Dietrich F.S."/>
            <person name="Fisk D.G."/>
            <person name="Binkley G."/>
            <person name="Balakrishnan R."/>
            <person name="Costanzo M.C."/>
            <person name="Dwight S.S."/>
            <person name="Hitz B.C."/>
            <person name="Karra K."/>
            <person name="Nash R.S."/>
            <person name="Weng S."/>
            <person name="Wong E.D."/>
            <person name="Lloyd P."/>
            <person name="Skrzypek M.S."/>
            <person name="Miyasato S.R."/>
            <person name="Simison M."/>
            <person name="Cherry J.M."/>
        </authorList>
    </citation>
    <scope>GENOME REANNOTATION</scope>
    <source>
        <strain>ATCC 204508 / S288c</strain>
    </source>
</reference>
<reference key="3">
    <citation type="journal article" date="2002" name="Genome Res.">
        <title>Parallel identification of new genes in Saccharomyces cerevisiae.</title>
        <authorList>
            <person name="Oshiro G."/>
            <person name="Wodicka L.M."/>
            <person name="Washburn M.P."/>
            <person name="Yates J.R. III"/>
            <person name="Lockhart D.J."/>
            <person name="Winzeler E.A."/>
        </authorList>
    </citation>
    <scope>IDENTIFICATION BY MASS SPECTROMETRY</scope>
</reference>
<keyword id="KW-1185">Reference proteome</keyword>
<name>YH32A_YEAST</name>
<organism>
    <name type="scientific">Saccharomyces cerevisiae (strain ATCC 204508 / S288c)</name>
    <name type="common">Baker's yeast</name>
    <dbReference type="NCBI Taxonomy" id="559292"/>
    <lineage>
        <taxon>Eukaryota</taxon>
        <taxon>Fungi</taxon>
        <taxon>Dikarya</taxon>
        <taxon>Ascomycota</taxon>
        <taxon>Saccharomycotina</taxon>
        <taxon>Saccharomycetes</taxon>
        <taxon>Saccharomycetales</taxon>
        <taxon>Saccharomycetaceae</taxon>
        <taxon>Saccharomyces</taxon>
    </lineage>
</organism>
<proteinExistence type="evidence at protein level"/>
<sequence length="59" mass="6741">MKLLQGRMTYRGDAHPHPRITPSLLANYVGNFKGFAMWHATGKIIHVPVRHQTGMHFCI</sequence>
<accession>P0C5N6</accession>
<protein>
    <recommendedName>
        <fullName>Uncharacterized protein YHR032W-A</fullName>
    </recommendedName>
</protein>
<gene>
    <name type="ordered locus">YHR032W-A</name>
</gene>